<protein>
    <recommendedName>
        <fullName evidence="1">Glutamate--cysteine ligase</fullName>
        <ecNumber evidence="1">6.3.2.2</ecNumber>
    </recommendedName>
    <alternativeName>
        <fullName evidence="1">Gamma-ECS</fullName>
        <shortName evidence="1">GCS</shortName>
    </alternativeName>
    <alternativeName>
        <fullName evidence="1">Gamma-glutamylcysteine synthetase</fullName>
    </alternativeName>
</protein>
<proteinExistence type="inferred from homology"/>
<name>GSH1_SHEON</name>
<evidence type="ECO:0000255" key="1">
    <source>
        <dbReference type="HAMAP-Rule" id="MF_00578"/>
    </source>
</evidence>
<evidence type="ECO:0000305" key="2"/>
<keyword id="KW-0067">ATP-binding</keyword>
<keyword id="KW-0317">Glutathione biosynthesis</keyword>
<keyword id="KW-0436">Ligase</keyword>
<keyword id="KW-0547">Nucleotide-binding</keyword>
<keyword id="KW-1185">Reference proteome</keyword>
<accession>Q8EBF9</accession>
<sequence>MKPFNELVQHFSDAQGRAALLGMLRGIEREALRIDESGYLALDGHPLELGSALTHSRITTDYSEALLEFITPVNHQVESLLQGLTETHAYSVRHLHGQRLWPVSMPCYVKDEANIPIARYGTSNTGKMKTLYRKGLTYRYGALMQIISGVHFNFSVSQELWQSLYELSDKSLSFDDFISESYFGLIRNYRRLVWVLPYLFGASPALCNSFIKGQKTDLRFEKSGRGTLYLPYATSLRMSDLGYTNKEQADLNISYNSLPEYLAGIRAAIKMPSANFANIGVKVDGEYRQLNANVLQIENEFYSPIRAKRVTKSGEKPSEALARAGVEYIEVRALDVNPFSPIGIEASQVRFLDLFLLYCLLTPSPKSDAAEEARLSANLKSVVLEGRKPGLELHTATGTLSLQTWLLELFDNLSSLAVLLDGETNAYQAALAHWRDAVVDPQKTLSGQVLQQLVTKGQDHGQWVMSLAQQYHQYFIDYPLSSEAASDYDAEAQSSLAKQVELEAAQSAVSLDDYLTDYFGAPA</sequence>
<feature type="chain" id="PRO_0000192540" description="Glutamate--cysteine ligase">
    <location>
        <begin position="1"/>
        <end position="523"/>
    </location>
</feature>
<gene>
    <name evidence="1" type="primary">gshA</name>
    <name type="ordered locus">SO_3559</name>
</gene>
<organism>
    <name type="scientific">Shewanella oneidensis (strain ATCC 700550 / JCM 31522 / CIP 106686 / LMG 19005 / NCIMB 14063 / MR-1)</name>
    <dbReference type="NCBI Taxonomy" id="211586"/>
    <lineage>
        <taxon>Bacteria</taxon>
        <taxon>Pseudomonadati</taxon>
        <taxon>Pseudomonadota</taxon>
        <taxon>Gammaproteobacteria</taxon>
        <taxon>Alteromonadales</taxon>
        <taxon>Shewanellaceae</taxon>
        <taxon>Shewanella</taxon>
    </lineage>
</organism>
<dbReference type="EC" id="6.3.2.2" evidence="1"/>
<dbReference type="EMBL" id="AE014299">
    <property type="protein sequence ID" value="AAN56550.2"/>
    <property type="status" value="ALT_INIT"/>
    <property type="molecule type" value="Genomic_DNA"/>
</dbReference>
<dbReference type="RefSeq" id="NP_719106.2">
    <property type="nucleotide sequence ID" value="NC_004347.2"/>
</dbReference>
<dbReference type="RefSeq" id="WP_011073388.1">
    <property type="nucleotide sequence ID" value="NZ_CP053946.1"/>
</dbReference>
<dbReference type="SMR" id="Q8EBF9"/>
<dbReference type="STRING" id="211586.SO_3559"/>
<dbReference type="PaxDb" id="211586-SO_3559"/>
<dbReference type="KEGG" id="son:SO_3559"/>
<dbReference type="PATRIC" id="fig|211586.12.peg.3454"/>
<dbReference type="eggNOG" id="COG2918">
    <property type="taxonomic scope" value="Bacteria"/>
</dbReference>
<dbReference type="HOGENOM" id="CLU_020728_3_0_6"/>
<dbReference type="OrthoDB" id="9803907at2"/>
<dbReference type="PhylomeDB" id="Q8EBF9"/>
<dbReference type="UniPathway" id="UPA00142">
    <property type="reaction ID" value="UER00209"/>
</dbReference>
<dbReference type="Proteomes" id="UP000008186">
    <property type="component" value="Chromosome"/>
</dbReference>
<dbReference type="GO" id="GO:0005829">
    <property type="term" value="C:cytosol"/>
    <property type="evidence" value="ECO:0000318"/>
    <property type="project" value="GO_Central"/>
</dbReference>
<dbReference type="GO" id="GO:0005524">
    <property type="term" value="F:ATP binding"/>
    <property type="evidence" value="ECO:0007669"/>
    <property type="project" value="UniProtKB-KW"/>
</dbReference>
<dbReference type="GO" id="GO:0004357">
    <property type="term" value="F:glutamate-cysteine ligase activity"/>
    <property type="evidence" value="ECO:0000318"/>
    <property type="project" value="GO_Central"/>
</dbReference>
<dbReference type="GO" id="GO:0046872">
    <property type="term" value="F:metal ion binding"/>
    <property type="evidence" value="ECO:0000318"/>
    <property type="project" value="GO_Central"/>
</dbReference>
<dbReference type="GO" id="GO:0006750">
    <property type="term" value="P:glutathione biosynthetic process"/>
    <property type="evidence" value="ECO:0000318"/>
    <property type="project" value="GO_Central"/>
</dbReference>
<dbReference type="FunFam" id="3.30.590.20:FF:000001">
    <property type="entry name" value="Glutamate--cysteine ligase"/>
    <property type="match status" value="1"/>
</dbReference>
<dbReference type="Gene3D" id="3.30.590.20">
    <property type="match status" value="1"/>
</dbReference>
<dbReference type="HAMAP" id="MF_00578">
    <property type="entry name" value="Glu_cys_ligase"/>
    <property type="match status" value="1"/>
</dbReference>
<dbReference type="InterPro" id="IPR014746">
    <property type="entry name" value="Gln_synth/guanido_kin_cat_dom"/>
</dbReference>
<dbReference type="InterPro" id="IPR007370">
    <property type="entry name" value="Glu_cys_ligase"/>
</dbReference>
<dbReference type="InterPro" id="IPR006334">
    <property type="entry name" value="Glut_cys_ligase"/>
</dbReference>
<dbReference type="NCBIfam" id="TIGR01434">
    <property type="entry name" value="glu_cys_ligase"/>
    <property type="match status" value="1"/>
</dbReference>
<dbReference type="PANTHER" id="PTHR38761">
    <property type="entry name" value="GLUTAMATE--CYSTEINE LIGASE"/>
    <property type="match status" value="1"/>
</dbReference>
<dbReference type="PANTHER" id="PTHR38761:SF1">
    <property type="entry name" value="GLUTAMATE--CYSTEINE LIGASE"/>
    <property type="match status" value="1"/>
</dbReference>
<dbReference type="Pfam" id="PF04262">
    <property type="entry name" value="Glu_cys_ligase"/>
    <property type="match status" value="1"/>
</dbReference>
<dbReference type="SUPFAM" id="SSF55931">
    <property type="entry name" value="Glutamine synthetase/guanido kinase"/>
    <property type="match status" value="1"/>
</dbReference>
<comment type="catalytic activity">
    <reaction evidence="1">
        <text>L-cysteine + L-glutamate + ATP = gamma-L-glutamyl-L-cysteine + ADP + phosphate + H(+)</text>
        <dbReference type="Rhea" id="RHEA:13285"/>
        <dbReference type="ChEBI" id="CHEBI:15378"/>
        <dbReference type="ChEBI" id="CHEBI:29985"/>
        <dbReference type="ChEBI" id="CHEBI:30616"/>
        <dbReference type="ChEBI" id="CHEBI:35235"/>
        <dbReference type="ChEBI" id="CHEBI:43474"/>
        <dbReference type="ChEBI" id="CHEBI:58173"/>
        <dbReference type="ChEBI" id="CHEBI:456216"/>
        <dbReference type="EC" id="6.3.2.2"/>
    </reaction>
</comment>
<comment type="pathway">
    <text evidence="1">Sulfur metabolism; glutathione biosynthesis; glutathione from L-cysteine and L-glutamate: step 1/2.</text>
</comment>
<comment type="similarity">
    <text evidence="1">Belongs to the glutamate--cysteine ligase type 1 family. Type 1 subfamily.</text>
</comment>
<comment type="sequence caution" evidence="2">
    <conflict type="erroneous initiation">
        <sequence resource="EMBL-CDS" id="AAN56550"/>
    </conflict>
    <text>Extended N-terminus.</text>
</comment>
<reference key="1">
    <citation type="journal article" date="2002" name="Nat. Biotechnol.">
        <title>Genome sequence of the dissimilatory metal ion-reducing bacterium Shewanella oneidensis.</title>
        <authorList>
            <person name="Heidelberg J.F."/>
            <person name="Paulsen I.T."/>
            <person name="Nelson K.E."/>
            <person name="Gaidos E.J."/>
            <person name="Nelson W.C."/>
            <person name="Read T.D."/>
            <person name="Eisen J.A."/>
            <person name="Seshadri R."/>
            <person name="Ward N.L."/>
            <person name="Methe B.A."/>
            <person name="Clayton R.A."/>
            <person name="Meyer T."/>
            <person name="Tsapin A."/>
            <person name="Scott J."/>
            <person name="Beanan M.J."/>
            <person name="Brinkac L.M."/>
            <person name="Daugherty S.C."/>
            <person name="DeBoy R.T."/>
            <person name="Dodson R.J."/>
            <person name="Durkin A.S."/>
            <person name="Haft D.H."/>
            <person name="Kolonay J.F."/>
            <person name="Madupu R."/>
            <person name="Peterson J.D."/>
            <person name="Umayam L.A."/>
            <person name="White O."/>
            <person name="Wolf A.M."/>
            <person name="Vamathevan J.J."/>
            <person name="Weidman J.F."/>
            <person name="Impraim M."/>
            <person name="Lee K."/>
            <person name="Berry K.J."/>
            <person name="Lee C."/>
            <person name="Mueller J."/>
            <person name="Khouri H.M."/>
            <person name="Gill J."/>
            <person name="Utterback T.R."/>
            <person name="McDonald L.A."/>
            <person name="Feldblyum T.V."/>
            <person name="Smith H.O."/>
            <person name="Venter J.C."/>
            <person name="Nealson K.H."/>
            <person name="Fraser C.M."/>
        </authorList>
    </citation>
    <scope>NUCLEOTIDE SEQUENCE [LARGE SCALE GENOMIC DNA]</scope>
    <source>
        <strain>ATCC 700550 / JCM 31522 / CIP 106686 / LMG 19005 / NCIMB 14063 / MR-1</strain>
    </source>
</reference>